<evidence type="ECO:0000255" key="1">
    <source>
        <dbReference type="HAMAP-Rule" id="MF_00166"/>
    </source>
</evidence>
<organism>
    <name type="scientific">Yersinia pseudotuberculosis serotype O:1b (strain IP 31758)</name>
    <dbReference type="NCBI Taxonomy" id="349747"/>
    <lineage>
        <taxon>Bacteria</taxon>
        <taxon>Pseudomonadati</taxon>
        <taxon>Pseudomonadota</taxon>
        <taxon>Gammaproteobacteria</taxon>
        <taxon>Enterobacterales</taxon>
        <taxon>Yersiniaceae</taxon>
        <taxon>Yersinia</taxon>
    </lineage>
</organism>
<reference key="1">
    <citation type="journal article" date="2007" name="PLoS Genet.">
        <title>The complete genome sequence of Yersinia pseudotuberculosis IP31758, the causative agent of Far East scarlet-like fever.</title>
        <authorList>
            <person name="Eppinger M."/>
            <person name="Rosovitz M.J."/>
            <person name="Fricke W.F."/>
            <person name="Rasko D.A."/>
            <person name="Kokorina G."/>
            <person name="Fayolle C."/>
            <person name="Lindler L.E."/>
            <person name="Carniel E."/>
            <person name="Ravel J."/>
        </authorList>
    </citation>
    <scope>NUCLEOTIDE SEQUENCE [LARGE SCALE GENOMIC DNA]</scope>
    <source>
        <strain>IP 31758</strain>
    </source>
</reference>
<feature type="chain" id="PRO_1000058264" description="DNA-binding protein Fis">
    <location>
        <begin position="1"/>
        <end position="98"/>
    </location>
</feature>
<feature type="DNA-binding region" description="H-T-H motif" evidence="1">
    <location>
        <begin position="74"/>
        <end position="93"/>
    </location>
</feature>
<keyword id="KW-0010">Activator</keyword>
<keyword id="KW-0238">DNA-binding</keyword>
<keyword id="KW-0804">Transcription</keyword>
<keyword id="KW-0805">Transcription regulation</keyword>
<dbReference type="EMBL" id="CP000720">
    <property type="protein sequence ID" value="ABS49892.1"/>
    <property type="molecule type" value="Genomic_DNA"/>
</dbReference>
<dbReference type="RefSeq" id="WP_002210061.1">
    <property type="nucleotide sequence ID" value="NC_009708.1"/>
</dbReference>
<dbReference type="SMR" id="A7FDQ0"/>
<dbReference type="GeneID" id="97454355"/>
<dbReference type="KEGG" id="ypi:YpsIP31758_0385"/>
<dbReference type="HOGENOM" id="CLU_158040_3_0_6"/>
<dbReference type="Proteomes" id="UP000002412">
    <property type="component" value="Chromosome"/>
</dbReference>
<dbReference type="GO" id="GO:0003700">
    <property type="term" value="F:DNA-binding transcription factor activity"/>
    <property type="evidence" value="ECO:0007669"/>
    <property type="project" value="UniProtKB-UniRule"/>
</dbReference>
<dbReference type="GO" id="GO:0043565">
    <property type="term" value="F:sequence-specific DNA binding"/>
    <property type="evidence" value="ECO:0007669"/>
    <property type="project" value="InterPro"/>
</dbReference>
<dbReference type="FunFam" id="1.10.10.60:FF:000006">
    <property type="entry name" value="DNA-binding protein Fis"/>
    <property type="match status" value="1"/>
</dbReference>
<dbReference type="Gene3D" id="1.10.10.60">
    <property type="entry name" value="Homeodomain-like"/>
    <property type="match status" value="1"/>
</dbReference>
<dbReference type="HAMAP" id="MF_00166">
    <property type="entry name" value="DNA_binding_Fis"/>
    <property type="match status" value="1"/>
</dbReference>
<dbReference type="InterPro" id="IPR005412">
    <property type="entry name" value="Fis_DNA-bd"/>
</dbReference>
<dbReference type="InterPro" id="IPR009057">
    <property type="entry name" value="Homeodomain-like_sf"/>
</dbReference>
<dbReference type="InterPro" id="IPR002197">
    <property type="entry name" value="HTH_Fis"/>
</dbReference>
<dbReference type="InterPro" id="IPR050207">
    <property type="entry name" value="Trans_regulatory_Fis"/>
</dbReference>
<dbReference type="NCBIfam" id="NF001659">
    <property type="entry name" value="PRK00430.1"/>
    <property type="match status" value="1"/>
</dbReference>
<dbReference type="PANTHER" id="PTHR47918">
    <property type="entry name" value="DNA-BINDING PROTEIN FIS"/>
    <property type="match status" value="1"/>
</dbReference>
<dbReference type="PANTHER" id="PTHR47918:SF1">
    <property type="entry name" value="DNA-BINDING PROTEIN FIS"/>
    <property type="match status" value="1"/>
</dbReference>
<dbReference type="Pfam" id="PF02954">
    <property type="entry name" value="HTH_8"/>
    <property type="match status" value="1"/>
</dbReference>
<dbReference type="PIRSF" id="PIRSF002097">
    <property type="entry name" value="DNA-binding_Fis"/>
    <property type="match status" value="1"/>
</dbReference>
<dbReference type="PRINTS" id="PR01591">
    <property type="entry name" value="DNABINDNGFIS"/>
</dbReference>
<dbReference type="PRINTS" id="PR01590">
    <property type="entry name" value="HTHFIS"/>
</dbReference>
<dbReference type="SUPFAM" id="SSF46689">
    <property type="entry name" value="Homeodomain-like"/>
    <property type="match status" value="1"/>
</dbReference>
<sequence length="98" mass="11197">MFEQRVNSDVLTVATVNSQDQVTQKPLRDSVKQALKNYFAQLNGQDVSDLYELVLAEVEQPLLDMVMQYTRGNQTRAALMMGINRGTLRKKLKKYGMN</sequence>
<name>FIS_YERP3</name>
<protein>
    <recommendedName>
        <fullName evidence="1">DNA-binding protein Fis</fullName>
    </recommendedName>
</protein>
<comment type="function">
    <text evidence="1">Activates ribosomal RNA transcription. Plays a direct role in upstream activation of rRNA promoters.</text>
</comment>
<comment type="subunit">
    <text evidence="1">Homodimer.</text>
</comment>
<comment type="similarity">
    <text evidence="1">Belongs to the transcriptional regulatory Fis family.</text>
</comment>
<proteinExistence type="inferred from homology"/>
<gene>
    <name evidence="1" type="primary">fis</name>
    <name type="ordered locus">YpsIP31758_0385</name>
</gene>
<accession>A7FDQ0</accession>